<protein>
    <recommendedName>
        <fullName evidence="1">Small ribosomal subunit protein uS13</fullName>
    </recommendedName>
    <alternativeName>
        <fullName evidence="3">30S ribosomal protein S13</fullName>
    </alternativeName>
</protein>
<feature type="chain" id="PRO_0000306589" description="Small ribosomal subunit protein uS13">
    <location>
        <begin position="1"/>
        <end position="121"/>
    </location>
</feature>
<feature type="region of interest" description="Disordered" evidence="2">
    <location>
        <begin position="93"/>
        <end position="121"/>
    </location>
</feature>
<proteinExistence type="inferred from homology"/>
<accession>Q0TMS2</accession>
<comment type="function">
    <text evidence="1">Located at the top of the head of the 30S subunit, it contacts several helices of the 16S rRNA. In the 70S ribosome it contacts the 23S rRNA (bridge B1a) and protein L5 of the 50S subunit (bridge B1b), connecting the 2 subunits; these bridges are implicated in subunit movement. Contacts the tRNAs in the A and P-sites.</text>
</comment>
<comment type="subunit">
    <text evidence="1">Part of the 30S ribosomal subunit. Forms a loose heterodimer with protein S19. Forms two bridges to the 50S subunit in the 70S ribosome.</text>
</comment>
<comment type="similarity">
    <text evidence="1">Belongs to the universal ribosomal protein uS13 family.</text>
</comment>
<reference key="1">
    <citation type="journal article" date="2006" name="Genome Res.">
        <title>Skewed genomic variability in strains of the toxigenic bacterial pathogen, Clostridium perfringens.</title>
        <authorList>
            <person name="Myers G.S.A."/>
            <person name="Rasko D.A."/>
            <person name="Cheung J.K."/>
            <person name="Ravel J."/>
            <person name="Seshadri R."/>
            <person name="DeBoy R.T."/>
            <person name="Ren Q."/>
            <person name="Varga J."/>
            <person name="Awad M.M."/>
            <person name="Brinkac L.M."/>
            <person name="Daugherty S.C."/>
            <person name="Haft D.H."/>
            <person name="Dodson R.J."/>
            <person name="Madupu R."/>
            <person name="Nelson W.C."/>
            <person name="Rosovitz M.J."/>
            <person name="Sullivan S.A."/>
            <person name="Khouri H."/>
            <person name="Dimitrov G.I."/>
            <person name="Watkins K.L."/>
            <person name="Mulligan S."/>
            <person name="Benton J."/>
            <person name="Radune D."/>
            <person name="Fisher D.J."/>
            <person name="Atkins H.S."/>
            <person name="Hiscox T."/>
            <person name="Jost B.H."/>
            <person name="Billington S.J."/>
            <person name="Songer J.G."/>
            <person name="McClane B.A."/>
            <person name="Titball R.W."/>
            <person name="Rood J.I."/>
            <person name="Melville S.B."/>
            <person name="Paulsen I.T."/>
        </authorList>
    </citation>
    <scope>NUCLEOTIDE SEQUENCE [LARGE SCALE GENOMIC DNA]</scope>
    <source>
        <strain>ATCC 13124 / DSM 756 / JCM 1290 / NCIMB 6125 / NCTC 8237 / S 107 / Type A</strain>
    </source>
</reference>
<gene>
    <name evidence="1" type="primary">rpsM</name>
    <name type="ordered locus">CPF_2688</name>
</gene>
<evidence type="ECO:0000255" key="1">
    <source>
        <dbReference type="HAMAP-Rule" id="MF_01315"/>
    </source>
</evidence>
<evidence type="ECO:0000256" key="2">
    <source>
        <dbReference type="SAM" id="MobiDB-lite"/>
    </source>
</evidence>
<evidence type="ECO:0000305" key="3"/>
<organism>
    <name type="scientific">Clostridium perfringens (strain ATCC 13124 / DSM 756 / JCM 1290 / NCIMB 6125 / NCTC 8237 / Type A)</name>
    <dbReference type="NCBI Taxonomy" id="195103"/>
    <lineage>
        <taxon>Bacteria</taxon>
        <taxon>Bacillati</taxon>
        <taxon>Bacillota</taxon>
        <taxon>Clostridia</taxon>
        <taxon>Eubacteriales</taxon>
        <taxon>Clostridiaceae</taxon>
        <taxon>Clostridium</taxon>
    </lineage>
</organism>
<sequence length="121" mass="13735">MARIAGIDLPREKRVEIGLTYIYGIGLPTSQKILEVTGVNPDTRVKDLTEEEVNSIRNYIKDLTVEGDLRREVALNIKRLVEIGSYRGIRHRKGLPLRGQKTKTNARTRKGPKKTIANKKK</sequence>
<dbReference type="EMBL" id="CP000246">
    <property type="protein sequence ID" value="ABG85014.1"/>
    <property type="molecule type" value="Genomic_DNA"/>
</dbReference>
<dbReference type="RefSeq" id="WP_003454489.1">
    <property type="nucleotide sequence ID" value="NC_008261.1"/>
</dbReference>
<dbReference type="SMR" id="Q0TMS2"/>
<dbReference type="STRING" id="195103.CPF_2688"/>
<dbReference type="PaxDb" id="195103-CPF_2688"/>
<dbReference type="GeneID" id="93001035"/>
<dbReference type="KEGG" id="cpf:CPF_2688"/>
<dbReference type="eggNOG" id="COG0099">
    <property type="taxonomic scope" value="Bacteria"/>
</dbReference>
<dbReference type="HOGENOM" id="CLU_103849_1_2_9"/>
<dbReference type="Proteomes" id="UP000001823">
    <property type="component" value="Chromosome"/>
</dbReference>
<dbReference type="GO" id="GO:0005829">
    <property type="term" value="C:cytosol"/>
    <property type="evidence" value="ECO:0007669"/>
    <property type="project" value="TreeGrafter"/>
</dbReference>
<dbReference type="GO" id="GO:0015935">
    <property type="term" value="C:small ribosomal subunit"/>
    <property type="evidence" value="ECO:0007669"/>
    <property type="project" value="TreeGrafter"/>
</dbReference>
<dbReference type="GO" id="GO:0019843">
    <property type="term" value="F:rRNA binding"/>
    <property type="evidence" value="ECO:0007669"/>
    <property type="project" value="UniProtKB-UniRule"/>
</dbReference>
<dbReference type="GO" id="GO:0003735">
    <property type="term" value="F:structural constituent of ribosome"/>
    <property type="evidence" value="ECO:0007669"/>
    <property type="project" value="InterPro"/>
</dbReference>
<dbReference type="GO" id="GO:0000049">
    <property type="term" value="F:tRNA binding"/>
    <property type="evidence" value="ECO:0007669"/>
    <property type="project" value="UniProtKB-UniRule"/>
</dbReference>
<dbReference type="GO" id="GO:0006412">
    <property type="term" value="P:translation"/>
    <property type="evidence" value="ECO:0007669"/>
    <property type="project" value="UniProtKB-UniRule"/>
</dbReference>
<dbReference type="FunFam" id="1.10.8.50:FF:000001">
    <property type="entry name" value="30S ribosomal protein S13"/>
    <property type="match status" value="1"/>
</dbReference>
<dbReference type="FunFam" id="4.10.910.10:FF:000001">
    <property type="entry name" value="30S ribosomal protein S13"/>
    <property type="match status" value="1"/>
</dbReference>
<dbReference type="Gene3D" id="1.10.8.50">
    <property type="match status" value="1"/>
</dbReference>
<dbReference type="Gene3D" id="4.10.910.10">
    <property type="entry name" value="30s ribosomal protein s13, domain 2"/>
    <property type="match status" value="1"/>
</dbReference>
<dbReference type="HAMAP" id="MF_01315">
    <property type="entry name" value="Ribosomal_uS13"/>
    <property type="match status" value="1"/>
</dbReference>
<dbReference type="InterPro" id="IPR027437">
    <property type="entry name" value="Rbsml_uS13_C"/>
</dbReference>
<dbReference type="InterPro" id="IPR001892">
    <property type="entry name" value="Ribosomal_uS13"/>
</dbReference>
<dbReference type="InterPro" id="IPR010979">
    <property type="entry name" value="Ribosomal_uS13-like_H2TH"/>
</dbReference>
<dbReference type="InterPro" id="IPR019980">
    <property type="entry name" value="Ribosomal_uS13_bac-type"/>
</dbReference>
<dbReference type="InterPro" id="IPR018269">
    <property type="entry name" value="Ribosomal_uS13_CS"/>
</dbReference>
<dbReference type="NCBIfam" id="TIGR03631">
    <property type="entry name" value="uS13_bact"/>
    <property type="match status" value="1"/>
</dbReference>
<dbReference type="PANTHER" id="PTHR10871">
    <property type="entry name" value="30S RIBOSOMAL PROTEIN S13/40S RIBOSOMAL PROTEIN S18"/>
    <property type="match status" value="1"/>
</dbReference>
<dbReference type="PANTHER" id="PTHR10871:SF1">
    <property type="entry name" value="SMALL RIBOSOMAL SUBUNIT PROTEIN US13M"/>
    <property type="match status" value="1"/>
</dbReference>
<dbReference type="Pfam" id="PF00416">
    <property type="entry name" value="Ribosomal_S13"/>
    <property type="match status" value="1"/>
</dbReference>
<dbReference type="PIRSF" id="PIRSF002134">
    <property type="entry name" value="Ribosomal_S13"/>
    <property type="match status" value="1"/>
</dbReference>
<dbReference type="SUPFAM" id="SSF46946">
    <property type="entry name" value="S13-like H2TH domain"/>
    <property type="match status" value="1"/>
</dbReference>
<dbReference type="PROSITE" id="PS00646">
    <property type="entry name" value="RIBOSOMAL_S13_1"/>
    <property type="match status" value="1"/>
</dbReference>
<dbReference type="PROSITE" id="PS50159">
    <property type="entry name" value="RIBOSOMAL_S13_2"/>
    <property type="match status" value="1"/>
</dbReference>
<name>RS13_CLOP1</name>
<keyword id="KW-0687">Ribonucleoprotein</keyword>
<keyword id="KW-0689">Ribosomal protein</keyword>
<keyword id="KW-0694">RNA-binding</keyword>
<keyword id="KW-0699">rRNA-binding</keyword>
<keyword id="KW-0820">tRNA-binding</keyword>